<organism>
    <name type="scientific">Shigella boydii serotype 4 (strain Sb227)</name>
    <dbReference type="NCBI Taxonomy" id="300268"/>
    <lineage>
        <taxon>Bacteria</taxon>
        <taxon>Pseudomonadati</taxon>
        <taxon>Pseudomonadota</taxon>
        <taxon>Gammaproteobacteria</taxon>
        <taxon>Enterobacterales</taxon>
        <taxon>Enterobacteriaceae</taxon>
        <taxon>Shigella</taxon>
    </lineage>
</organism>
<keyword id="KW-0687">Ribonucleoprotein</keyword>
<keyword id="KW-0689">Ribosomal protein</keyword>
<keyword id="KW-0694">RNA-binding</keyword>
<keyword id="KW-0699">rRNA-binding</keyword>
<comment type="function">
    <text evidence="1">One of two assembly initiator proteins, it binds directly to the 5'-end of the 23S rRNA, where it nucleates assembly of the 50S subunit.</text>
</comment>
<comment type="function">
    <text evidence="1">One of the proteins that surrounds the polypeptide exit tunnel on the outside of the subunit.</text>
</comment>
<comment type="subunit">
    <text evidence="1">Part of the 50S ribosomal subunit.</text>
</comment>
<comment type="similarity">
    <text evidence="1">Belongs to the universal ribosomal protein uL24 family.</text>
</comment>
<protein>
    <recommendedName>
        <fullName evidence="1">Large ribosomal subunit protein uL24</fullName>
    </recommendedName>
    <alternativeName>
        <fullName evidence="2">50S ribosomal protein L24</fullName>
    </alternativeName>
</protein>
<name>RL24_SHIBS</name>
<proteinExistence type="inferred from homology"/>
<gene>
    <name evidence="1" type="primary">rplX</name>
    <name type="ordered locus">SBO_3303</name>
</gene>
<sequence>MAAKIRRDDEVIVLTGKDKGKRGKVKNVLSSGKVIVEGINLVKKHQKPVPALNQPGGIVEKEAAIQVSNVAIFNAATGKADRVGFRFEDGKKVRFFKSNSETIK</sequence>
<accession>Q31VW7</accession>
<feature type="chain" id="PRO_0000241660" description="Large ribosomal subunit protein uL24">
    <location>
        <begin position="1"/>
        <end position="104"/>
    </location>
</feature>
<dbReference type="EMBL" id="CP000036">
    <property type="protein sequence ID" value="ABB67791.1"/>
    <property type="molecule type" value="Genomic_DNA"/>
</dbReference>
<dbReference type="RefSeq" id="WP_000729185.1">
    <property type="nucleotide sequence ID" value="NC_007613.1"/>
</dbReference>
<dbReference type="SMR" id="Q31VW7"/>
<dbReference type="GeneID" id="93778678"/>
<dbReference type="KEGG" id="sbo:SBO_3303"/>
<dbReference type="HOGENOM" id="CLU_093315_2_2_6"/>
<dbReference type="Proteomes" id="UP000007067">
    <property type="component" value="Chromosome"/>
</dbReference>
<dbReference type="GO" id="GO:0005829">
    <property type="term" value="C:cytosol"/>
    <property type="evidence" value="ECO:0007669"/>
    <property type="project" value="UniProtKB-ARBA"/>
</dbReference>
<dbReference type="GO" id="GO:1990904">
    <property type="term" value="C:ribonucleoprotein complex"/>
    <property type="evidence" value="ECO:0007669"/>
    <property type="project" value="UniProtKB-KW"/>
</dbReference>
<dbReference type="GO" id="GO:0005840">
    <property type="term" value="C:ribosome"/>
    <property type="evidence" value="ECO:0007669"/>
    <property type="project" value="UniProtKB-KW"/>
</dbReference>
<dbReference type="GO" id="GO:0019843">
    <property type="term" value="F:rRNA binding"/>
    <property type="evidence" value="ECO:0007669"/>
    <property type="project" value="UniProtKB-UniRule"/>
</dbReference>
<dbReference type="GO" id="GO:0003735">
    <property type="term" value="F:structural constituent of ribosome"/>
    <property type="evidence" value="ECO:0007669"/>
    <property type="project" value="InterPro"/>
</dbReference>
<dbReference type="GO" id="GO:0006412">
    <property type="term" value="P:translation"/>
    <property type="evidence" value="ECO:0007669"/>
    <property type="project" value="UniProtKB-UniRule"/>
</dbReference>
<dbReference type="CDD" id="cd06089">
    <property type="entry name" value="KOW_RPL26"/>
    <property type="match status" value="1"/>
</dbReference>
<dbReference type="FunFam" id="2.30.30.30:FF:000004">
    <property type="entry name" value="50S ribosomal protein L24"/>
    <property type="match status" value="1"/>
</dbReference>
<dbReference type="Gene3D" id="2.30.30.30">
    <property type="match status" value="1"/>
</dbReference>
<dbReference type="HAMAP" id="MF_01326_B">
    <property type="entry name" value="Ribosomal_uL24_B"/>
    <property type="match status" value="1"/>
</dbReference>
<dbReference type="InterPro" id="IPR005824">
    <property type="entry name" value="KOW"/>
</dbReference>
<dbReference type="InterPro" id="IPR014722">
    <property type="entry name" value="Rib_uL2_dom2"/>
</dbReference>
<dbReference type="InterPro" id="IPR003256">
    <property type="entry name" value="Ribosomal_uL24"/>
</dbReference>
<dbReference type="InterPro" id="IPR005825">
    <property type="entry name" value="Ribosomal_uL24_CS"/>
</dbReference>
<dbReference type="InterPro" id="IPR041988">
    <property type="entry name" value="Ribosomal_uL24_KOW"/>
</dbReference>
<dbReference type="InterPro" id="IPR008991">
    <property type="entry name" value="Translation_prot_SH3-like_sf"/>
</dbReference>
<dbReference type="NCBIfam" id="TIGR01079">
    <property type="entry name" value="rplX_bact"/>
    <property type="match status" value="1"/>
</dbReference>
<dbReference type="PANTHER" id="PTHR12903">
    <property type="entry name" value="MITOCHONDRIAL RIBOSOMAL PROTEIN L24"/>
    <property type="match status" value="1"/>
</dbReference>
<dbReference type="Pfam" id="PF00467">
    <property type="entry name" value="KOW"/>
    <property type="match status" value="1"/>
</dbReference>
<dbReference type="Pfam" id="PF17136">
    <property type="entry name" value="ribosomal_L24"/>
    <property type="match status" value="1"/>
</dbReference>
<dbReference type="SMART" id="SM00739">
    <property type="entry name" value="KOW"/>
    <property type="match status" value="1"/>
</dbReference>
<dbReference type="SUPFAM" id="SSF50104">
    <property type="entry name" value="Translation proteins SH3-like domain"/>
    <property type="match status" value="1"/>
</dbReference>
<dbReference type="PROSITE" id="PS01108">
    <property type="entry name" value="RIBOSOMAL_L24"/>
    <property type="match status" value="1"/>
</dbReference>
<evidence type="ECO:0000255" key="1">
    <source>
        <dbReference type="HAMAP-Rule" id="MF_01326"/>
    </source>
</evidence>
<evidence type="ECO:0000305" key="2"/>
<reference key="1">
    <citation type="journal article" date="2005" name="Nucleic Acids Res.">
        <title>Genome dynamics and diversity of Shigella species, the etiologic agents of bacillary dysentery.</title>
        <authorList>
            <person name="Yang F."/>
            <person name="Yang J."/>
            <person name="Zhang X."/>
            <person name="Chen L."/>
            <person name="Jiang Y."/>
            <person name="Yan Y."/>
            <person name="Tang X."/>
            <person name="Wang J."/>
            <person name="Xiong Z."/>
            <person name="Dong J."/>
            <person name="Xue Y."/>
            <person name="Zhu Y."/>
            <person name="Xu X."/>
            <person name="Sun L."/>
            <person name="Chen S."/>
            <person name="Nie H."/>
            <person name="Peng J."/>
            <person name="Xu J."/>
            <person name="Wang Y."/>
            <person name="Yuan Z."/>
            <person name="Wen Y."/>
            <person name="Yao Z."/>
            <person name="Shen Y."/>
            <person name="Qiang B."/>
            <person name="Hou Y."/>
            <person name="Yu J."/>
            <person name="Jin Q."/>
        </authorList>
    </citation>
    <scope>NUCLEOTIDE SEQUENCE [LARGE SCALE GENOMIC DNA]</scope>
    <source>
        <strain>Sb227</strain>
    </source>
</reference>